<comment type="function">
    <text evidence="2">Component of the ubiquinol-cytochrome c reductase complex (complex III or cytochrome b-c1 complex) that is part of the mitochondrial respiratory chain. The b-c1 complex mediates electron transfer from ubiquinol to cytochrome c. Contributes to the generation of a proton gradient across the mitochondrial membrane that is then used for ATP synthesis.</text>
</comment>
<comment type="cofactor">
    <cofactor evidence="2">
        <name>heme b</name>
        <dbReference type="ChEBI" id="CHEBI:60344"/>
    </cofactor>
    <text evidence="2">Binds 2 heme b groups non-covalently.</text>
</comment>
<comment type="subunit">
    <text evidence="2">The cytochrome bc1 complex contains 3 respiratory subunits (MT-CYB, CYC1 and UQCRFS1), 2 core proteins (UQCRC1 and UQCRC2) and probably 6 low-molecular weight proteins.</text>
</comment>
<comment type="subcellular location">
    <subcellularLocation>
        <location evidence="2">Mitochondrion inner membrane</location>
        <topology evidence="2">Multi-pass membrane protein</topology>
    </subcellularLocation>
</comment>
<comment type="miscellaneous">
    <text evidence="1">Heme 1 (or BL or b562) is low-potential and absorbs at about 562 nm, and heme 2 (or BH or b566) is high-potential and absorbs at about 566 nm.</text>
</comment>
<comment type="similarity">
    <text evidence="3 4">Belongs to the cytochrome b family.</text>
</comment>
<comment type="caution">
    <text evidence="2">The full-length protein contains only eight transmembrane helices, not nine as predicted by bioinformatics tools.</text>
</comment>
<gene>
    <name type="primary">MT-CYB</name>
    <name type="synonym">COB</name>
    <name type="synonym">CYTB</name>
    <name type="synonym">MTCYB</name>
</gene>
<proteinExistence type="inferred from homology"/>
<organism>
    <name type="scientific">Myxine glutinosa</name>
    <name type="common">Atlantic hagfish</name>
    <dbReference type="NCBI Taxonomy" id="7769"/>
    <lineage>
        <taxon>Eukaryota</taxon>
        <taxon>Metazoa</taxon>
        <taxon>Chordata</taxon>
        <taxon>Craniata</taxon>
        <taxon>Vertebrata</taxon>
        <taxon>Cyclostomata</taxon>
        <taxon>Myxini</taxon>
        <taxon>Myxiniformes</taxon>
        <taxon>Myxinidae</taxon>
        <taxon>Myxininae</taxon>
        <taxon>Myxine</taxon>
    </lineage>
</organism>
<reference key="1">
    <citation type="journal article" date="1998" name="J. Mol. Evol.">
        <title>The mitochondrial DNA molecule of the hagfish (Myxine glutinosa) and vertebrate phylogeny.</title>
        <authorList>
            <person name="Rasmussen A.S."/>
            <person name="Janke A."/>
            <person name="Arnason U."/>
        </authorList>
    </citation>
    <scope>NUCLEOTIDE SEQUENCE [GENOMIC DNA]</scope>
</reference>
<reference key="2">
    <citation type="journal article" date="2001" name="J. Mol. Evol.">
        <title>The complete mitochondrial genome of the hagfish Myxine glutinosa: unique features of the control region.</title>
        <authorList>
            <person name="Delarbre C."/>
            <person name="Rasmussen A.S."/>
            <person name="Arnason U."/>
            <person name="Gachelin G."/>
        </authorList>
    </citation>
    <scope>NUCLEOTIDE SEQUENCE [GENOMIC DNA]</scope>
</reference>
<keyword id="KW-0249">Electron transport</keyword>
<keyword id="KW-0349">Heme</keyword>
<keyword id="KW-0408">Iron</keyword>
<keyword id="KW-0472">Membrane</keyword>
<keyword id="KW-0479">Metal-binding</keyword>
<keyword id="KW-0496">Mitochondrion</keyword>
<keyword id="KW-0999">Mitochondrion inner membrane</keyword>
<keyword id="KW-0679">Respiratory chain</keyword>
<keyword id="KW-0812">Transmembrane</keyword>
<keyword id="KW-1133">Transmembrane helix</keyword>
<keyword id="KW-0813">Transport</keyword>
<keyword id="KW-0830">Ubiquinone</keyword>
<protein>
    <recommendedName>
        <fullName>Cytochrome b</fullName>
    </recommendedName>
    <alternativeName>
        <fullName>Complex III subunit 3</fullName>
    </alternativeName>
    <alternativeName>
        <fullName>Complex III subunit III</fullName>
    </alternativeName>
    <alternativeName>
        <fullName>Cytochrome b-c1 complex subunit 3</fullName>
    </alternativeName>
    <alternativeName>
        <fullName>Ubiquinol-cytochrome-c reductase complex cytochrome b subunit</fullName>
    </alternativeName>
</protein>
<name>CYB_MYXGL</name>
<geneLocation type="mitochondrion"/>
<accession>Q9G2W6</accession>
<accession>O63916</accession>
<sequence>MTKIFRKSDPFIKIVNSALVDLPSPSNISYMWNFGSILGLCLFLQIATGLILTMHFSPSIHMAFSSVVHIVRDVNHGWFIRNFHITGASLFFSCMFIHIGRGIYYGSYKNIKTWYSGVILFICAMVTAFFGYVLPWGQMSFWAATVITNLLSAVPMMGTRMVETVWGGFSVGDPTLKRFLVLHFLVPFLMIAVSLTHLLFLHETGSSNPMGMNPNLDKVPFHPYFSFKDILGFLITLSLIFLGSTLFPYLTTDPDNFTQANSLVTPPHIKPEWYFLFAYAILRAIPNKLMGVFALIMSLSVLLFMPFLIKSNLRSLTFQPFMQFTFWLMISNFILLSWLGAMPLEFPYTIMSQVTSFLYFFIFLFLFPLVSYKENKYLNSRYPPF</sequence>
<evidence type="ECO:0000250" key="1"/>
<evidence type="ECO:0000250" key="2">
    <source>
        <dbReference type="UniProtKB" id="P00157"/>
    </source>
</evidence>
<evidence type="ECO:0000255" key="3">
    <source>
        <dbReference type="PROSITE-ProRule" id="PRU00967"/>
    </source>
</evidence>
<evidence type="ECO:0000255" key="4">
    <source>
        <dbReference type="PROSITE-ProRule" id="PRU00968"/>
    </source>
</evidence>
<evidence type="ECO:0000305" key="5"/>
<dbReference type="EMBL" id="Y15185">
    <property type="protein sequence ID" value="CAA75484.1"/>
    <property type="molecule type" value="Genomic_DNA"/>
</dbReference>
<dbReference type="EMBL" id="AJ404477">
    <property type="protein sequence ID" value="CAC20661.1"/>
    <property type="molecule type" value="Genomic_DNA"/>
</dbReference>
<dbReference type="RefSeq" id="NP_073285.1">
    <property type="nucleotide sequence ID" value="NC_002639.1"/>
</dbReference>
<dbReference type="SMR" id="Q9G2W6"/>
<dbReference type="GeneID" id="802346"/>
<dbReference type="CTD" id="4519"/>
<dbReference type="GO" id="GO:0005743">
    <property type="term" value="C:mitochondrial inner membrane"/>
    <property type="evidence" value="ECO:0007669"/>
    <property type="project" value="UniProtKB-SubCell"/>
</dbReference>
<dbReference type="GO" id="GO:0045275">
    <property type="term" value="C:respiratory chain complex III"/>
    <property type="evidence" value="ECO:0007669"/>
    <property type="project" value="InterPro"/>
</dbReference>
<dbReference type="GO" id="GO:0046872">
    <property type="term" value="F:metal ion binding"/>
    <property type="evidence" value="ECO:0007669"/>
    <property type="project" value="UniProtKB-KW"/>
</dbReference>
<dbReference type="GO" id="GO:0008121">
    <property type="term" value="F:ubiquinol-cytochrome-c reductase activity"/>
    <property type="evidence" value="ECO:0007669"/>
    <property type="project" value="InterPro"/>
</dbReference>
<dbReference type="GO" id="GO:0006122">
    <property type="term" value="P:mitochondrial electron transport, ubiquinol to cytochrome c"/>
    <property type="evidence" value="ECO:0007669"/>
    <property type="project" value="TreeGrafter"/>
</dbReference>
<dbReference type="CDD" id="cd00290">
    <property type="entry name" value="cytochrome_b_C"/>
    <property type="match status" value="1"/>
</dbReference>
<dbReference type="CDD" id="cd00284">
    <property type="entry name" value="Cytochrome_b_N"/>
    <property type="match status" value="1"/>
</dbReference>
<dbReference type="Gene3D" id="1.20.810.10">
    <property type="entry name" value="Cytochrome Bc1 Complex, Chain C"/>
    <property type="match status" value="1"/>
</dbReference>
<dbReference type="InterPro" id="IPR005798">
    <property type="entry name" value="Cyt_b/b6_C"/>
</dbReference>
<dbReference type="InterPro" id="IPR036150">
    <property type="entry name" value="Cyt_b/b6_C_sf"/>
</dbReference>
<dbReference type="InterPro" id="IPR005797">
    <property type="entry name" value="Cyt_b/b6_N"/>
</dbReference>
<dbReference type="InterPro" id="IPR027387">
    <property type="entry name" value="Cytb/b6-like_sf"/>
</dbReference>
<dbReference type="InterPro" id="IPR030689">
    <property type="entry name" value="Cytochrome_b"/>
</dbReference>
<dbReference type="InterPro" id="IPR048260">
    <property type="entry name" value="Cytochrome_b_C_euk/bac"/>
</dbReference>
<dbReference type="InterPro" id="IPR048259">
    <property type="entry name" value="Cytochrome_b_N_euk/bac"/>
</dbReference>
<dbReference type="InterPro" id="IPR016174">
    <property type="entry name" value="Di-haem_cyt_TM"/>
</dbReference>
<dbReference type="PANTHER" id="PTHR19271">
    <property type="entry name" value="CYTOCHROME B"/>
    <property type="match status" value="1"/>
</dbReference>
<dbReference type="PANTHER" id="PTHR19271:SF16">
    <property type="entry name" value="CYTOCHROME B"/>
    <property type="match status" value="1"/>
</dbReference>
<dbReference type="Pfam" id="PF00032">
    <property type="entry name" value="Cytochrom_B_C"/>
    <property type="match status" value="1"/>
</dbReference>
<dbReference type="Pfam" id="PF00033">
    <property type="entry name" value="Cytochrome_B"/>
    <property type="match status" value="1"/>
</dbReference>
<dbReference type="PIRSF" id="PIRSF038885">
    <property type="entry name" value="COB"/>
    <property type="match status" value="1"/>
</dbReference>
<dbReference type="SUPFAM" id="SSF81648">
    <property type="entry name" value="a domain/subunit of cytochrome bc1 complex (Ubiquinol-cytochrome c reductase)"/>
    <property type="match status" value="1"/>
</dbReference>
<dbReference type="SUPFAM" id="SSF81342">
    <property type="entry name" value="Transmembrane di-heme cytochromes"/>
    <property type="match status" value="1"/>
</dbReference>
<dbReference type="PROSITE" id="PS51003">
    <property type="entry name" value="CYTB_CTER"/>
    <property type="match status" value="1"/>
</dbReference>
<dbReference type="PROSITE" id="PS51002">
    <property type="entry name" value="CYTB_NTER"/>
    <property type="match status" value="1"/>
</dbReference>
<feature type="chain" id="PRO_0000061261" description="Cytochrome b">
    <location>
        <begin position="1"/>
        <end position="385"/>
    </location>
</feature>
<feature type="transmembrane region" description="Helical" evidence="2">
    <location>
        <begin position="34"/>
        <end position="54"/>
    </location>
</feature>
<feature type="transmembrane region" description="Helical" evidence="2">
    <location>
        <begin position="78"/>
        <end position="99"/>
    </location>
</feature>
<feature type="transmembrane region" description="Helical" evidence="2">
    <location>
        <begin position="114"/>
        <end position="134"/>
    </location>
</feature>
<feature type="transmembrane region" description="Helical" evidence="2">
    <location>
        <begin position="179"/>
        <end position="199"/>
    </location>
</feature>
<feature type="transmembrane region" description="Helical" evidence="2">
    <location>
        <begin position="227"/>
        <end position="247"/>
    </location>
</feature>
<feature type="transmembrane region" description="Helical" evidence="2">
    <location>
        <begin position="289"/>
        <end position="309"/>
    </location>
</feature>
<feature type="transmembrane region" description="Helical" evidence="2">
    <location>
        <begin position="321"/>
        <end position="341"/>
    </location>
</feature>
<feature type="transmembrane region" description="Helical" evidence="2">
    <location>
        <begin position="348"/>
        <end position="368"/>
    </location>
</feature>
<feature type="binding site" description="axial binding residue" evidence="2">
    <location>
        <position position="84"/>
    </location>
    <ligand>
        <name>heme b</name>
        <dbReference type="ChEBI" id="CHEBI:60344"/>
        <label>b562</label>
    </ligand>
    <ligandPart>
        <name>Fe</name>
        <dbReference type="ChEBI" id="CHEBI:18248"/>
    </ligandPart>
</feature>
<feature type="binding site" description="axial binding residue" evidence="2">
    <location>
        <position position="98"/>
    </location>
    <ligand>
        <name>heme b</name>
        <dbReference type="ChEBI" id="CHEBI:60344"/>
        <label>b566</label>
    </ligand>
    <ligandPart>
        <name>Fe</name>
        <dbReference type="ChEBI" id="CHEBI:18248"/>
    </ligandPart>
</feature>
<feature type="binding site" description="axial binding residue" evidence="2">
    <location>
        <position position="183"/>
    </location>
    <ligand>
        <name>heme b</name>
        <dbReference type="ChEBI" id="CHEBI:60344"/>
        <label>b562</label>
    </ligand>
    <ligandPart>
        <name>Fe</name>
        <dbReference type="ChEBI" id="CHEBI:18248"/>
    </ligandPart>
</feature>
<feature type="binding site" description="axial binding residue" evidence="2">
    <location>
        <position position="197"/>
    </location>
    <ligand>
        <name>heme b</name>
        <dbReference type="ChEBI" id="CHEBI:60344"/>
        <label>b566</label>
    </ligand>
    <ligandPart>
        <name>Fe</name>
        <dbReference type="ChEBI" id="CHEBI:18248"/>
    </ligandPart>
</feature>
<feature type="binding site" evidence="2">
    <location>
        <position position="202"/>
    </location>
    <ligand>
        <name>a ubiquinone</name>
        <dbReference type="ChEBI" id="CHEBI:16389"/>
    </ligand>
</feature>
<feature type="sequence conflict" description="In Ref. 1; CAA75484." evidence="5" ref="1">
    <original>L</original>
    <variation>F</variation>
    <location>
        <position position="44"/>
    </location>
</feature>
<feature type="sequence conflict" description="In Ref. 1; CAA75484." evidence="5" ref="1">
    <original>V</original>
    <variation>I</variation>
    <location>
        <position position="264"/>
    </location>
</feature>